<name>FADB_ENTCL</name>
<proteinExistence type="inferred from homology"/>
<organism>
    <name type="scientific">Enterobacter cloacae</name>
    <dbReference type="NCBI Taxonomy" id="550"/>
    <lineage>
        <taxon>Bacteria</taxon>
        <taxon>Pseudomonadati</taxon>
        <taxon>Pseudomonadota</taxon>
        <taxon>Gammaproteobacteria</taxon>
        <taxon>Enterobacterales</taxon>
        <taxon>Enterobacteriaceae</taxon>
        <taxon>Enterobacter</taxon>
        <taxon>Enterobacter cloacae complex</taxon>
    </lineage>
</organism>
<feature type="chain" id="PRO_0000109266" description="Fatty acid oxidation complex subunit alpha">
    <location>
        <begin position="1"/>
        <end position="729"/>
    </location>
</feature>
<feature type="region of interest" description="Enoyl-CoA hydratase/isomerase" evidence="1">
    <location>
        <begin position="1"/>
        <end position="189"/>
    </location>
</feature>
<feature type="region of interest" description="3-hydroxyacyl-CoA dehydrogenase" evidence="1">
    <location>
        <begin position="311"/>
        <end position="729"/>
    </location>
</feature>
<feature type="active site" description="For 3-hydroxyacyl-CoA dehydrogenase activity" evidence="1">
    <location>
        <position position="450"/>
    </location>
</feature>
<feature type="binding site" evidence="1">
    <location>
        <position position="296"/>
    </location>
    <ligand>
        <name>substrate</name>
    </ligand>
</feature>
<feature type="binding site" evidence="1">
    <location>
        <position position="324"/>
    </location>
    <ligand>
        <name>NAD(+)</name>
        <dbReference type="ChEBI" id="CHEBI:57540"/>
    </ligand>
</feature>
<feature type="binding site" evidence="1">
    <location>
        <position position="343"/>
    </location>
    <ligand>
        <name>NAD(+)</name>
        <dbReference type="ChEBI" id="CHEBI:57540"/>
    </ligand>
</feature>
<feature type="binding site" evidence="1">
    <location>
        <begin position="400"/>
        <end position="402"/>
    </location>
    <ligand>
        <name>NAD(+)</name>
        <dbReference type="ChEBI" id="CHEBI:57540"/>
    </ligand>
</feature>
<feature type="binding site" evidence="1">
    <location>
        <position position="407"/>
    </location>
    <ligand>
        <name>NAD(+)</name>
        <dbReference type="ChEBI" id="CHEBI:57540"/>
    </ligand>
</feature>
<feature type="binding site" evidence="1">
    <location>
        <position position="429"/>
    </location>
    <ligand>
        <name>NAD(+)</name>
        <dbReference type="ChEBI" id="CHEBI:57540"/>
    </ligand>
</feature>
<feature type="binding site" evidence="1">
    <location>
        <position position="453"/>
    </location>
    <ligand>
        <name>NAD(+)</name>
        <dbReference type="ChEBI" id="CHEBI:57540"/>
    </ligand>
</feature>
<feature type="binding site" evidence="1">
    <location>
        <position position="500"/>
    </location>
    <ligand>
        <name>substrate</name>
    </ligand>
</feature>
<feature type="binding site" evidence="1">
    <location>
        <position position="660"/>
    </location>
    <ligand>
        <name>substrate</name>
    </ligand>
</feature>
<feature type="site" description="Important for catalytic activity" evidence="1">
    <location>
        <position position="119"/>
    </location>
</feature>
<feature type="site" description="Important for catalytic activity" evidence="1">
    <location>
        <position position="139"/>
    </location>
</feature>
<keyword id="KW-0276">Fatty acid metabolism</keyword>
<keyword id="KW-0413">Isomerase</keyword>
<keyword id="KW-0442">Lipid degradation</keyword>
<keyword id="KW-0443">Lipid metabolism</keyword>
<keyword id="KW-0456">Lyase</keyword>
<keyword id="KW-0511">Multifunctional enzyme</keyword>
<keyword id="KW-0520">NAD</keyword>
<keyword id="KW-0560">Oxidoreductase</keyword>
<sequence>MLYKGDTLYLNWLEDGIAELVFDAPGSVNKLDTATVASLGQALDVLEKQPELKGMLLRSNKAAFIVGADITEFLSLFLVPEEQLSQWLHFANSVFNRLEDLPVPTISAVNGYALGGGCECVLATDYRLATPDLRIGLPETRLGIMPGFGGSVRMPRMLGADSAMEIIAAGKDVGAEQAQKIGLVDGVVKPEKLVEGALAILRQAINGDLDWKAKRQPKLEPLKLSKIEATMSFTIAKGMVMQTAGKHYPAPITAVKTIEAAARLGRDEALKLENQSFVPLAHTNEARALVGIFLNDQFVKGKARQLTKNVETPKHAAVLGAGIMGGGIAYQSAWKGVPVVMKDISEKSLTLGMTEAAKLLNKQLERGKIDGLKLAGVISTIQPVLEYSGFDRVDVVVEAVVENPKVKKAVLAETEDKVRPETVLASNTSTIPISELASVLKRPENFCGMHFFNPVHRMPLVEVIRGEKTSDETIAKVVAWASKMGKTPIVVNDCPGFFVNRVLFPYFAGFSQLLRDGADFRKIDKVMEKQFGWPMGPAYLLDVVGIDTAHHAQAVMAAGFPQRMQKDYRDAIDALFDANRFGQKNGLGFWRYKENSKGKPKKEEDAVVDGLLADVSQPKRDFTDDEIIARMMIPMINEVVRCLEEGIIASPAEADMALVYGLGFPPFHGGAFRWLDTLGSARYLDMAQQYQHLGPLYEVPEGLRNKARHNEPYYPAVEPARPVGELKTA</sequence>
<dbReference type="EC" id="4.2.1.17" evidence="1"/>
<dbReference type="EC" id="5.1.2.3" evidence="1"/>
<dbReference type="EC" id="5.3.3.8" evidence="1"/>
<dbReference type="EC" id="1.1.1.35" evidence="1"/>
<dbReference type="EMBL" id="AF191029">
    <property type="protein sequence ID" value="AAG17183.1"/>
    <property type="molecule type" value="Genomic_DNA"/>
</dbReference>
<dbReference type="SMR" id="Q9F0Y7"/>
<dbReference type="eggNOG" id="COG1024">
    <property type="taxonomic scope" value="Bacteria"/>
</dbReference>
<dbReference type="eggNOG" id="COG1250">
    <property type="taxonomic scope" value="Bacteria"/>
</dbReference>
<dbReference type="UniPathway" id="UPA00659"/>
<dbReference type="GO" id="GO:0036125">
    <property type="term" value="C:fatty acid beta-oxidation multienzyme complex"/>
    <property type="evidence" value="ECO:0007669"/>
    <property type="project" value="InterPro"/>
</dbReference>
<dbReference type="GO" id="GO:0008692">
    <property type="term" value="F:3-hydroxybutyryl-CoA epimerase activity"/>
    <property type="evidence" value="ECO:0007669"/>
    <property type="project" value="UniProtKB-UniRule"/>
</dbReference>
<dbReference type="GO" id="GO:0004165">
    <property type="term" value="F:delta(3)-delta(2)-enoyl-CoA isomerase activity"/>
    <property type="evidence" value="ECO:0007669"/>
    <property type="project" value="UniProtKB-UniRule"/>
</dbReference>
<dbReference type="GO" id="GO:0004300">
    <property type="term" value="F:enoyl-CoA hydratase activity"/>
    <property type="evidence" value="ECO:0007669"/>
    <property type="project" value="UniProtKB-UniRule"/>
</dbReference>
<dbReference type="GO" id="GO:0016509">
    <property type="term" value="F:long-chain-3-hydroxyacyl-CoA dehydrogenase activity"/>
    <property type="evidence" value="ECO:0007669"/>
    <property type="project" value="TreeGrafter"/>
</dbReference>
<dbReference type="GO" id="GO:0070403">
    <property type="term" value="F:NAD+ binding"/>
    <property type="evidence" value="ECO:0007669"/>
    <property type="project" value="InterPro"/>
</dbReference>
<dbReference type="GO" id="GO:0006635">
    <property type="term" value="P:fatty acid beta-oxidation"/>
    <property type="evidence" value="ECO:0007669"/>
    <property type="project" value="UniProtKB-UniRule"/>
</dbReference>
<dbReference type="CDD" id="cd06558">
    <property type="entry name" value="crotonase-like"/>
    <property type="match status" value="1"/>
</dbReference>
<dbReference type="FunFam" id="1.10.1040.50:FF:000001">
    <property type="entry name" value="Fatty acid oxidation complex subunit alpha"/>
    <property type="match status" value="1"/>
</dbReference>
<dbReference type="FunFam" id="3.90.226.10:FF:000018">
    <property type="entry name" value="Fatty acid oxidation complex subunit alpha"/>
    <property type="match status" value="1"/>
</dbReference>
<dbReference type="FunFam" id="3.40.50.720:FF:000009">
    <property type="entry name" value="Fatty oxidation complex, alpha subunit"/>
    <property type="match status" value="1"/>
</dbReference>
<dbReference type="Gene3D" id="1.10.1040.50">
    <property type="match status" value="1"/>
</dbReference>
<dbReference type="Gene3D" id="3.90.226.10">
    <property type="entry name" value="2-enoyl-CoA Hydratase, Chain A, domain 1"/>
    <property type="match status" value="1"/>
</dbReference>
<dbReference type="Gene3D" id="3.40.50.720">
    <property type="entry name" value="NAD(P)-binding Rossmann-like Domain"/>
    <property type="match status" value="1"/>
</dbReference>
<dbReference type="HAMAP" id="MF_01621">
    <property type="entry name" value="FadB"/>
    <property type="match status" value="1"/>
</dbReference>
<dbReference type="InterPro" id="IPR006180">
    <property type="entry name" value="3-OHacyl-CoA_DH_CS"/>
</dbReference>
<dbReference type="InterPro" id="IPR006176">
    <property type="entry name" value="3-OHacyl-CoA_DH_NAD-bd"/>
</dbReference>
<dbReference type="InterPro" id="IPR006108">
    <property type="entry name" value="3HC_DH_C"/>
</dbReference>
<dbReference type="InterPro" id="IPR008927">
    <property type="entry name" value="6-PGluconate_DH-like_C_sf"/>
</dbReference>
<dbReference type="InterPro" id="IPR029045">
    <property type="entry name" value="ClpP/crotonase-like_dom_sf"/>
</dbReference>
<dbReference type="InterPro" id="IPR018376">
    <property type="entry name" value="Enoyl-CoA_hyd/isom_CS"/>
</dbReference>
<dbReference type="InterPro" id="IPR001753">
    <property type="entry name" value="Enoyl-CoA_hydra/iso"/>
</dbReference>
<dbReference type="InterPro" id="IPR050136">
    <property type="entry name" value="FA_oxidation_alpha_subunit"/>
</dbReference>
<dbReference type="InterPro" id="IPR012799">
    <property type="entry name" value="FadB"/>
</dbReference>
<dbReference type="InterPro" id="IPR036291">
    <property type="entry name" value="NAD(P)-bd_dom_sf"/>
</dbReference>
<dbReference type="NCBIfam" id="TIGR02437">
    <property type="entry name" value="FadB"/>
    <property type="match status" value="1"/>
</dbReference>
<dbReference type="NCBIfam" id="NF008727">
    <property type="entry name" value="PRK11730.1"/>
    <property type="match status" value="1"/>
</dbReference>
<dbReference type="PANTHER" id="PTHR43612">
    <property type="entry name" value="TRIFUNCTIONAL ENZYME SUBUNIT ALPHA"/>
    <property type="match status" value="1"/>
</dbReference>
<dbReference type="PANTHER" id="PTHR43612:SF3">
    <property type="entry name" value="TRIFUNCTIONAL ENZYME SUBUNIT ALPHA, MITOCHONDRIAL"/>
    <property type="match status" value="1"/>
</dbReference>
<dbReference type="Pfam" id="PF00725">
    <property type="entry name" value="3HCDH"/>
    <property type="match status" value="2"/>
</dbReference>
<dbReference type="Pfam" id="PF02737">
    <property type="entry name" value="3HCDH_N"/>
    <property type="match status" value="1"/>
</dbReference>
<dbReference type="Pfam" id="PF00378">
    <property type="entry name" value="ECH_1"/>
    <property type="match status" value="1"/>
</dbReference>
<dbReference type="SUPFAM" id="SSF48179">
    <property type="entry name" value="6-phosphogluconate dehydrogenase C-terminal domain-like"/>
    <property type="match status" value="2"/>
</dbReference>
<dbReference type="SUPFAM" id="SSF52096">
    <property type="entry name" value="ClpP/crotonase"/>
    <property type="match status" value="1"/>
</dbReference>
<dbReference type="SUPFAM" id="SSF51735">
    <property type="entry name" value="NAD(P)-binding Rossmann-fold domains"/>
    <property type="match status" value="1"/>
</dbReference>
<dbReference type="PROSITE" id="PS00067">
    <property type="entry name" value="3HCDH"/>
    <property type="match status" value="1"/>
</dbReference>
<dbReference type="PROSITE" id="PS00166">
    <property type="entry name" value="ENOYL_COA_HYDRATASE"/>
    <property type="match status" value="1"/>
</dbReference>
<comment type="function">
    <text evidence="1">Involved in the aerobic and anaerobic degradation of long-chain fatty acids via beta-oxidation cycle. Catalyzes the formation of 3-oxoacyl-CoA from enoyl-CoA via L-3-hydroxyacyl-CoA. It can also use D-3-hydroxyacyl-CoA and cis-3-enoyl-CoA as substrate.</text>
</comment>
<comment type="catalytic activity">
    <reaction evidence="1">
        <text>a (3S)-3-hydroxyacyl-CoA + NAD(+) = a 3-oxoacyl-CoA + NADH + H(+)</text>
        <dbReference type="Rhea" id="RHEA:22432"/>
        <dbReference type="ChEBI" id="CHEBI:15378"/>
        <dbReference type="ChEBI" id="CHEBI:57318"/>
        <dbReference type="ChEBI" id="CHEBI:57540"/>
        <dbReference type="ChEBI" id="CHEBI:57945"/>
        <dbReference type="ChEBI" id="CHEBI:90726"/>
        <dbReference type="EC" id="1.1.1.35"/>
    </reaction>
</comment>
<comment type="catalytic activity">
    <reaction evidence="1">
        <text>a (3S)-3-hydroxyacyl-CoA = a (2E)-enoyl-CoA + H2O</text>
        <dbReference type="Rhea" id="RHEA:16105"/>
        <dbReference type="ChEBI" id="CHEBI:15377"/>
        <dbReference type="ChEBI" id="CHEBI:57318"/>
        <dbReference type="ChEBI" id="CHEBI:58856"/>
        <dbReference type="EC" id="4.2.1.17"/>
    </reaction>
</comment>
<comment type="catalytic activity">
    <reaction evidence="1">
        <text>a 4-saturated-(3S)-3-hydroxyacyl-CoA = a (3E)-enoyl-CoA + H2O</text>
        <dbReference type="Rhea" id="RHEA:20724"/>
        <dbReference type="ChEBI" id="CHEBI:15377"/>
        <dbReference type="ChEBI" id="CHEBI:58521"/>
        <dbReference type="ChEBI" id="CHEBI:137480"/>
        <dbReference type="EC" id="4.2.1.17"/>
    </reaction>
</comment>
<comment type="catalytic activity">
    <reaction evidence="1">
        <text>(3S)-3-hydroxybutanoyl-CoA = (3R)-3-hydroxybutanoyl-CoA</text>
        <dbReference type="Rhea" id="RHEA:21760"/>
        <dbReference type="ChEBI" id="CHEBI:57315"/>
        <dbReference type="ChEBI" id="CHEBI:57316"/>
        <dbReference type="EC" id="5.1.2.3"/>
    </reaction>
</comment>
<comment type="catalytic activity">
    <reaction evidence="1">
        <text>a (3Z)-enoyl-CoA = a 4-saturated (2E)-enoyl-CoA</text>
        <dbReference type="Rhea" id="RHEA:45900"/>
        <dbReference type="ChEBI" id="CHEBI:85097"/>
        <dbReference type="ChEBI" id="CHEBI:85489"/>
        <dbReference type="EC" id="5.3.3.8"/>
    </reaction>
</comment>
<comment type="catalytic activity">
    <reaction evidence="1">
        <text>a (3E)-enoyl-CoA = a 4-saturated (2E)-enoyl-CoA</text>
        <dbReference type="Rhea" id="RHEA:45228"/>
        <dbReference type="ChEBI" id="CHEBI:58521"/>
        <dbReference type="ChEBI" id="CHEBI:85097"/>
        <dbReference type="EC" id="5.3.3.8"/>
    </reaction>
</comment>
<comment type="pathway">
    <text evidence="1">Lipid metabolism; fatty acid beta-oxidation.</text>
</comment>
<comment type="subunit">
    <text evidence="1">Heterotetramer of two alpha chains (FadB) and two beta chains (FadA).</text>
</comment>
<comment type="similarity">
    <text evidence="1">In the N-terminal section; belongs to the enoyl-CoA hydratase/isomerase family.</text>
</comment>
<comment type="similarity">
    <text evidence="1">In the C-terminal section; belongs to the 3-hydroxyacyl-CoA dehydrogenase family.</text>
</comment>
<gene>
    <name evidence="1" type="primary">fadB</name>
</gene>
<accession>Q9F0Y7</accession>
<evidence type="ECO:0000255" key="1">
    <source>
        <dbReference type="HAMAP-Rule" id="MF_01621"/>
    </source>
</evidence>
<protein>
    <recommendedName>
        <fullName evidence="1">Fatty acid oxidation complex subunit alpha</fullName>
    </recommendedName>
    <domain>
        <recommendedName>
            <fullName evidence="1">Enoyl-CoA hydratase/Delta(3)-cis-Delta(2)-trans-enoyl-CoA isomerase/3-hydroxybutyryl-CoA epimerase</fullName>
            <ecNumber evidence="1">4.2.1.17</ecNumber>
            <ecNumber evidence="1">5.1.2.3</ecNumber>
            <ecNumber evidence="1">5.3.3.8</ecNumber>
        </recommendedName>
    </domain>
    <domain>
        <recommendedName>
            <fullName evidence="1">3-hydroxyacyl-CoA dehydrogenase</fullName>
            <ecNumber evidence="1">1.1.1.35</ecNumber>
        </recommendedName>
    </domain>
</protein>
<reference key="1">
    <citation type="journal article" date="2000" name="Appl. Environ. Microbiol.">
        <title>Fatty acid competition as a mechanism by which Enterobacter cloacae suppresses Pythium ultimum sporangium germination and damping-off.</title>
        <authorList>
            <person name="van Dijk K."/>
            <person name="Nelson E.B."/>
        </authorList>
    </citation>
    <scope>NUCLEOTIDE SEQUENCE [GENOMIC DNA]</scope>
    <source>
        <strain>A-11 / 501R3</strain>
    </source>
</reference>